<evidence type="ECO:0000255" key="1">
    <source>
        <dbReference type="HAMAP-Rule" id="MF_01020"/>
    </source>
</evidence>
<keyword id="KW-0028">Amino-acid biosynthesis</keyword>
<keyword id="KW-0067">ATP-binding</keyword>
<keyword id="KW-0963">Cytoplasm</keyword>
<keyword id="KW-0368">Histidine biosynthesis</keyword>
<keyword id="KW-0378">Hydrolase</keyword>
<keyword id="KW-0547">Nucleotide-binding</keyword>
<keyword id="KW-1185">Reference proteome</keyword>
<name>HIS2_BIFA0</name>
<reference key="1">
    <citation type="journal article" date="2009" name="J. Bacteriol.">
        <title>Genome sequence of the probiotic bacterium Bifidobacterium animalis subsp. lactis AD011.</title>
        <authorList>
            <person name="Kim J.F."/>
            <person name="Jeong H."/>
            <person name="Yu D.S."/>
            <person name="Choi S.-H."/>
            <person name="Hur C.-G."/>
            <person name="Park M.-S."/>
            <person name="Yoon S.H."/>
            <person name="Kim D.-W."/>
            <person name="Ji G.E."/>
            <person name="Park H.-S."/>
            <person name="Oh T.K."/>
        </authorList>
    </citation>
    <scope>NUCLEOTIDE SEQUENCE [LARGE SCALE GENOMIC DNA]</scope>
    <source>
        <strain>AD011</strain>
    </source>
</reference>
<accession>B8DUC2</accession>
<protein>
    <recommendedName>
        <fullName evidence="1">Phosphoribosyl-ATP pyrophosphatase</fullName>
        <shortName evidence="1">PRA-PH</shortName>
        <ecNumber evidence="1">3.6.1.31</ecNumber>
    </recommendedName>
</protein>
<comment type="catalytic activity">
    <reaction evidence="1">
        <text>1-(5-phospho-beta-D-ribosyl)-ATP + H2O = 1-(5-phospho-beta-D-ribosyl)-5'-AMP + diphosphate + H(+)</text>
        <dbReference type="Rhea" id="RHEA:22828"/>
        <dbReference type="ChEBI" id="CHEBI:15377"/>
        <dbReference type="ChEBI" id="CHEBI:15378"/>
        <dbReference type="ChEBI" id="CHEBI:33019"/>
        <dbReference type="ChEBI" id="CHEBI:59457"/>
        <dbReference type="ChEBI" id="CHEBI:73183"/>
        <dbReference type="EC" id="3.6.1.31"/>
    </reaction>
</comment>
<comment type="pathway">
    <text evidence="1">Amino-acid biosynthesis; L-histidine biosynthesis; L-histidine from 5-phospho-alpha-D-ribose 1-diphosphate: step 2/9.</text>
</comment>
<comment type="subcellular location">
    <subcellularLocation>
        <location evidence="1">Cytoplasm</location>
    </subcellularLocation>
</comment>
<comment type="similarity">
    <text evidence="1">Belongs to the PRA-PH family.</text>
</comment>
<sequence length="87" mass="9768">MKTFESLFAELSEKAANQTPGSLTVDELGKGTHFIGKKIIEEAGETWIAAEYEGAERTAEEMSQLIYHLQVMMIDRGITLDDIYKNL</sequence>
<dbReference type="EC" id="3.6.1.31" evidence="1"/>
<dbReference type="EMBL" id="CP001213">
    <property type="protein sequence ID" value="ACL29601.1"/>
    <property type="molecule type" value="Genomic_DNA"/>
</dbReference>
<dbReference type="RefSeq" id="WP_004217988.1">
    <property type="nucleotide sequence ID" value="NC_011835.1"/>
</dbReference>
<dbReference type="SMR" id="B8DUC2"/>
<dbReference type="STRING" id="442563.BLA_1314"/>
<dbReference type="KEGG" id="bla:BLA_1314"/>
<dbReference type="HOGENOM" id="CLU_123337_2_1_11"/>
<dbReference type="UniPathway" id="UPA00031">
    <property type="reaction ID" value="UER00007"/>
</dbReference>
<dbReference type="Proteomes" id="UP000002456">
    <property type="component" value="Chromosome"/>
</dbReference>
<dbReference type="GO" id="GO:0005737">
    <property type="term" value="C:cytoplasm"/>
    <property type="evidence" value="ECO:0007669"/>
    <property type="project" value="UniProtKB-SubCell"/>
</dbReference>
<dbReference type="GO" id="GO:0005524">
    <property type="term" value="F:ATP binding"/>
    <property type="evidence" value="ECO:0007669"/>
    <property type="project" value="UniProtKB-KW"/>
</dbReference>
<dbReference type="GO" id="GO:0004636">
    <property type="term" value="F:phosphoribosyl-ATP diphosphatase activity"/>
    <property type="evidence" value="ECO:0007669"/>
    <property type="project" value="UniProtKB-UniRule"/>
</dbReference>
<dbReference type="GO" id="GO:0000105">
    <property type="term" value="P:L-histidine biosynthetic process"/>
    <property type="evidence" value="ECO:0007669"/>
    <property type="project" value="UniProtKB-UniRule"/>
</dbReference>
<dbReference type="CDD" id="cd11547">
    <property type="entry name" value="NTP-PPase_HisE"/>
    <property type="match status" value="1"/>
</dbReference>
<dbReference type="Gene3D" id="1.10.287.1080">
    <property type="entry name" value="MazG-like"/>
    <property type="match status" value="1"/>
</dbReference>
<dbReference type="HAMAP" id="MF_01020">
    <property type="entry name" value="HisE"/>
    <property type="match status" value="1"/>
</dbReference>
<dbReference type="InterPro" id="IPR008179">
    <property type="entry name" value="HisE"/>
</dbReference>
<dbReference type="InterPro" id="IPR021130">
    <property type="entry name" value="PRib-ATP_PPHydrolase-like"/>
</dbReference>
<dbReference type="NCBIfam" id="TIGR03188">
    <property type="entry name" value="histidine_hisI"/>
    <property type="match status" value="1"/>
</dbReference>
<dbReference type="NCBIfam" id="NF001610">
    <property type="entry name" value="PRK00400.1-1"/>
    <property type="match status" value="1"/>
</dbReference>
<dbReference type="PANTHER" id="PTHR42945">
    <property type="entry name" value="HISTIDINE BIOSYNTHESIS BIFUNCTIONAL PROTEIN"/>
    <property type="match status" value="1"/>
</dbReference>
<dbReference type="PANTHER" id="PTHR42945:SF1">
    <property type="entry name" value="HISTIDINE BIOSYNTHESIS BIFUNCTIONAL PROTEIN HIS7"/>
    <property type="match status" value="1"/>
</dbReference>
<dbReference type="Pfam" id="PF01503">
    <property type="entry name" value="PRA-PH"/>
    <property type="match status" value="1"/>
</dbReference>
<dbReference type="SUPFAM" id="SSF101386">
    <property type="entry name" value="all-alpha NTP pyrophosphatases"/>
    <property type="match status" value="1"/>
</dbReference>
<feature type="chain" id="PRO_1000149047" description="Phosphoribosyl-ATP pyrophosphatase">
    <location>
        <begin position="1"/>
        <end position="87"/>
    </location>
</feature>
<proteinExistence type="inferred from homology"/>
<organism>
    <name type="scientific">Bifidobacterium animalis subsp. lactis (strain AD011)</name>
    <dbReference type="NCBI Taxonomy" id="442563"/>
    <lineage>
        <taxon>Bacteria</taxon>
        <taxon>Bacillati</taxon>
        <taxon>Actinomycetota</taxon>
        <taxon>Actinomycetes</taxon>
        <taxon>Bifidobacteriales</taxon>
        <taxon>Bifidobacteriaceae</taxon>
        <taxon>Bifidobacterium</taxon>
    </lineage>
</organism>
<gene>
    <name evidence="1" type="primary">hisE</name>
    <name type="ordered locus">BLA_1314</name>
</gene>